<gene>
    <name evidence="7" type="primary">AacuP</name>
    <name type="ORF">ASPACDRAFT_46493</name>
</gene>
<sequence>MPAPAATQTATLNKFIDGWKGWTPDGFLASWSDDCAQVTLPFSSGVPPRTRAITEKLFPKLMSILTNFQLTVHNVIHEPAESKAVIYAITTADSPFGPYKNEHACFVWFDESGESVNRIEEMFDGVFMKGFLPKLEAYIKGQEEA</sequence>
<comment type="function">
    <text evidence="4 6 10">Monooxygenase; part of the gene cluster that mediates the biosynthesis of the tetrahydroxanthone dimer secalonic acid D (PubMed:30996871, PubMed:33891392). The pathway begins with the synthesis of atrochrysone thioester by the polyketide synthase AacuL (Probable). The atrochrysone carboxyl ACP thioesterase AacuM then breaks the thioester bond and releases the atrochrysone carboxylic acid from AacuL (Probable). Atrochrysone carboxylic acid is decarboxylated by the decarboxylase AacuI, and oxidized by the anthrone oxygenase AacuG to yield emodin (Probable). Emodin is then reduced to emodin hydroquinone by a yet unidentified oxidoreductase (Probable). A-ring reduction by the short chain dehydrogenase AacuN, dehydration by the scytalone dehydratase-like protein AacuK and probable spontaneous re-oxidation, results in overall deoxygenation to chrysophanol (PubMed:33891392). Baeyer-Villiger oxidation by the Baeyer-Villiger monooxygenase (BVMO) AacuH then yields monodictyphenone (PubMed:33891392). Monodictyphenone is transformed into compounds with the tetrahydroxanthone skeleton via methylesterification by the methyltransferase AacuQ, followed by the action of the flavin-dependent monooxygenase AacuC, the isomerase AacuP, and the short chain dehydrogenase/reductase AacuF or AacuD (PubMed:33891392). AacuF and AacuD should accept the same compound as a substrate but perform the ketoreduction with a different stereoselectivity, thus yielding blennolides B and A, respectively (PubMed:33891392). In the final step of the biosynthesis, the cytochrome P450 monooxygenase AacuE accepts blennolide B and/or blennolide A to conduct the dimerization reaction to furnish the tetrahydroxanthone dimers, secalonic acids D, B, and F (PubMed:33891392).</text>
</comment>
<comment type="pathway">
    <text evidence="9">Secondary metabolite biosynthesis.</text>
</comment>
<comment type="biotechnology">
    <text evidence="1 2 3 5">Secalonic acids show unprecedented anticancer activities against various human cancer cells and might be interesting for further derivatization, targeting diseases such as cancer.</text>
</comment>
<comment type="similarity">
    <text evidence="8">Belongs to the avfA family.</text>
</comment>
<evidence type="ECO:0000269" key="1">
    <source>
    </source>
</evidence>
<evidence type="ECO:0000269" key="2">
    <source>
    </source>
</evidence>
<evidence type="ECO:0000269" key="3">
    <source>
    </source>
</evidence>
<evidence type="ECO:0000269" key="4">
    <source>
    </source>
</evidence>
<evidence type="ECO:0000269" key="5">
    <source>
    </source>
</evidence>
<evidence type="ECO:0000269" key="6">
    <source>
    </source>
</evidence>
<evidence type="ECO:0000303" key="7">
    <source>
    </source>
</evidence>
<evidence type="ECO:0000305" key="8"/>
<evidence type="ECO:0000305" key="9">
    <source>
    </source>
</evidence>
<evidence type="ECO:0000305" key="10">
    <source>
    </source>
</evidence>
<name>AACUP_ASPA1</name>
<accession>A0A1L9WLD7</accession>
<feature type="chain" id="PRO_0000453490" description="Monooxygenase AacuP">
    <location>
        <begin position="1"/>
        <end position="145"/>
    </location>
</feature>
<organism>
    <name type="scientific">Aspergillus aculeatus (strain ATCC 16872 / CBS 172.66 / WB 5094)</name>
    <dbReference type="NCBI Taxonomy" id="690307"/>
    <lineage>
        <taxon>Eukaryota</taxon>
        <taxon>Fungi</taxon>
        <taxon>Dikarya</taxon>
        <taxon>Ascomycota</taxon>
        <taxon>Pezizomycotina</taxon>
        <taxon>Eurotiomycetes</taxon>
        <taxon>Eurotiomycetidae</taxon>
        <taxon>Eurotiales</taxon>
        <taxon>Aspergillaceae</taxon>
        <taxon>Aspergillus</taxon>
        <taxon>Aspergillus subgen. Circumdati</taxon>
    </lineage>
</organism>
<reference key="1">
    <citation type="journal article" date="2017" name="Genome Biol.">
        <title>Comparative genomics reveals high biological diversity and specific adaptations in the industrially and medically important fungal genus Aspergillus.</title>
        <authorList>
            <person name="de Vries R.P."/>
            <person name="Riley R."/>
            <person name="Wiebenga A."/>
            <person name="Aguilar-Osorio G."/>
            <person name="Amillis S."/>
            <person name="Uchima C.A."/>
            <person name="Anderluh G."/>
            <person name="Asadollahi M."/>
            <person name="Askin M."/>
            <person name="Barry K."/>
            <person name="Battaglia E."/>
            <person name="Bayram O."/>
            <person name="Benocci T."/>
            <person name="Braus-Stromeyer S.A."/>
            <person name="Caldana C."/>
            <person name="Canovas D."/>
            <person name="Cerqueira G.C."/>
            <person name="Chen F."/>
            <person name="Chen W."/>
            <person name="Choi C."/>
            <person name="Clum A."/>
            <person name="Dos Santos R.A."/>
            <person name="Damasio A.R."/>
            <person name="Diallinas G."/>
            <person name="Emri T."/>
            <person name="Fekete E."/>
            <person name="Flipphi M."/>
            <person name="Freyberg S."/>
            <person name="Gallo A."/>
            <person name="Gournas C."/>
            <person name="Habgood R."/>
            <person name="Hainaut M."/>
            <person name="Harispe M.L."/>
            <person name="Henrissat B."/>
            <person name="Hilden K.S."/>
            <person name="Hope R."/>
            <person name="Hossain A."/>
            <person name="Karabika E."/>
            <person name="Karaffa L."/>
            <person name="Karanyi Z."/>
            <person name="Krasevec N."/>
            <person name="Kuo A."/>
            <person name="Kusch H."/>
            <person name="LaButti K."/>
            <person name="Lagendijk E.L."/>
            <person name="Lapidus A."/>
            <person name="Levasseur A."/>
            <person name="Lindquist E."/>
            <person name="Lipzen A."/>
            <person name="Logrieco A.F."/>
            <person name="MacCabe A."/>
            <person name="Maekelae M.R."/>
            <person name="Malavazi I."/>
            <person name="Melin P."/>
            <person name="Meyer V."/>
            <person name="Mielnichuk N."/>
            <person name="Miskei M."/>
            <person name="Molnar A.P."/>
            <person name="Mule G."/>
            <person name="Ngan C.Y."/>
            <person name="Orejas M."/>
            <person name="Orosz E."/>
            <person name="Ouedraogo J.P."/>
            <person name="Overkamp K.M."/>
            <person name="Park H.-S."/>
            <person name="Perrone G."/>
            <person name="Piumi F."/>
            <person name="Punt P.J."/>
            <person name="Ram A.F."/>
            <person name="Ramon A."/>
            <person name="Rauscher S."/>
            <person name="Record E."/>
            <person name="Riano-Pachon D.M."/>
            <person name="Robert V."/>
            <person name="Roehrig J."/>
            <person name="Ruller R."/>
            <person name="Salamov A."/>
            <person name="Salih N.S."/>
            <person name="Samson R.A."/>
            <person name="Sandor E."/>
            <person name="Sanguinetti M."/>
            <person name="Schuetze T."/>
            <person name="Sepcic K."/>
            <person name="Shelest E."/>
            <person name="Sherlock G."/>
            <person name="Sophianopoulou V."/>
            <person name="Squina F.M."/>
            <person name="Sun H."/>
            <person name="Susca A."/>
            <person name="Todd R.B."/>
            <person name="Tsang A."/>
            <person name="Unkles S.E."/>
            <person name="van de Wiele N."/>
            <person name="van Rossen-Uffink D."/>
            <person name="Oliveira J.V."/>
            <person name="Vesth T.C."/>
            <person name="Visser J."/>
            <person name="Yu J.-H."/>
            <person name="Zhou M."/>
            <person name="Andersen M.R."/>
            <person name="Archer D.B."/>
            <person name="Baker S.E."/>
            <person name="Benoit I."/>
            <person name="Brakhage A.A."/>
            <person name="Braus G.H."/>
            <person name="Fischer R."/>
            <person name="Frisvad J.C."/>
            <person name="Goldman G.H."/>
            <person name="Houbraken J."/>
            <person name="Oakley B."/>
            <person name="Pocsi I."/>
            <person name="Scazzocchio C."/>
            <person name="Seiboth B."/>
            <person name="vanKuyk P.A."/>
            <person name="Wortman J."/>
            <person name="Dyer P.S."/>
            <person name="Grigoriev I.V."/>
        </authorList>
    </citation>
    <scope>NUCLEOTIDE SEQUENCE [LARGE SCALE GENOMIC DNA]</scope>
    <source>
        <strain>ATCC 16872 / CBS 172.66 / WB 5094</strain>
    </source>
</reference>
<reference key="2">
    <citation type="journal article" date="2017" name="Neoplasma">
        <title>Secalonic acid- F inhibited cell growth more effectively than 5-fluorouracil on hepatocellular carcinoma in vitro and in vivo.</title>
        <authorList>
            <person name="Gao X."/>
            <person name="Sun H.L."/>
            <person name="Liu D.S."/>
            <person name="Zhang J.R."/>
            <person name="Zhang J."/>
            <person name="Yan M.M."/>
            <person name="Pan X.H."/>
        </authorList>
    </citation>
    <scope>BIOTECHNOLOGY</scope>
</reference>
<reference key="3">
    <citation type="journal article" date="2018" name="Curr. Microbiol.">
        <title>Secondary Metabolites and Their Biological Activity from Aspergillus aculeatus KKU-CT2.</title>
        <authorList>
            <person name="Yodsing N."/>
            <person name="Lekphrom R."/>
            <person name="Sangsopha W."/>
            <person name="Aimi T."/>
            <person name="Boonlue S."/>
        </authorList>
    </citation>
    <scope>BIOTECHNOLOGY</scope>
</reference>
<reference key="4">
    <citation type="journal article" date="2019" name="Chem. Sci.">
        <title>Structure revision of cryptosporioptides and determination of the genetic basis for dimeric xanthone biosynthesis in fungi.</title>
        <authorList>
            <person name="Greco C."/>
            <person name="de Mattos-Shipley K."/>
            <person name="Bailey A.M."/>
            <person name="Mulholland N.P."/>
            <person name="Vincent J.L."/>
            <person name="Willis C.L."/>
            <person name="Cox R.J."/>
            <person name="Simpson T.J."/>
        </authorList>
    </citation>
    <scope>IDENTIFICATION</scope>
    <scope>FUNCTION</scope>
</reference>
<reference key="5">
    <citation type="journal article" date="2019" name="Molecules">
        <title>Secalonic Acid-F, a Novel Mycotoxin, Represses the Progression of Hepatocellular Carcinoma via MARCH1 Regulation of the PI3K/AKT/beta-catenin Signaling Pathway.</title>
        <authorList>
            <person name="Xie L."/>
            <person name="Li M."/>
            <person name="Liu D."/>
            <person name="Wang X."/>
            <person name="Wang P."/>
            <person name="Dai H."/>
            <person name="Yang W."/>
            <person name="Liu W."/>
            <person name="Hu X."/>
            <person name="Zhao M."/>
        </authorList>
    </citation>
    <scope>BIOTECHNOLOGY</scope>
</reference>
<reference key="6">
    <citation type="journal article" date="2020" name="ACS Omega">
        <title>Discovery of a Secalonic Acid Derivative from Aspergillus aculeatus, an Endophyte of Rosa damascena Mill., Triggers Apoptosis in MDA-MB-231 Triple Negative Breast Cancer Cells.</title>
        <authorList>
            <person name="Farooq S."/>
            <person name="Qayum A."/>
            <person name="Nalli Y."/>
            <person name="Lauro G."/>
            <person name="Chini M.G."/>
            <person name="Bifulco G."/>
            <person name="Chaubey A."/>
            <person name="Singh S.K."/>
            <person name="Riyaz-Ul-Hassan S."/>
            <person name="Ali A."/>
        </authorList>
    </citation>
    <scope>BIOTECHNOLOGY</scope>
</reference>
<reference key="7">
    <citation type="journal article" date="2021" name="J. Nat. Prod.">
        <title>Heterologous biosynthesis of tetrahydroxanthone dimers: determination of key factors for selective or divergent synthesis.</title>
        <authorList>
            <person name="Wei X."/>
            <person name="Chen X."/>
            <person name="Chen L."/>
            <person name="Yan D."/>
            <person name="Wang W.G."/>
            <person name="Matsuda Y."/>
        </authorList>
    </citation>
    <scope>FUNCTION</scope>
    <scope>CATALYTIC ACTIVITY</scope>
    <scope>PATHWAY</scope>
</reference>
<proteinExistence type="evidence at protein level"/>
<dbReference type="EC" id="1.-.-.-" evidence="9"/>
<dbReference type="EMBL" id="KV878984">
    <property type="protein sequence ID" value="OJJ96968.1"/>
    <property type="molecule type" value="Genomic_DNA"/>
</dbReference>
<dbReference type="RefSeq" id="XP_020053308.1">
    <property type="nucleotide sequence ID" value="XM_020201794.1"/>
</dbReference>
<dbReference type="SMR" id="A0A1L9WLD7"/>
<dbReference type="STRING" id="690307.A0A1L9WLD7"/>
<dbReference type="GeneID" id="30975608"/>
<dbReference type="VEuPathDB" id="FungiDB:ASPACDRAFT_46493"/>
<dbReference type="OMA" id="TDIGPYA"/>
<dbReference type="OrthoDB" id="3758478at2759"/>
<dbReference type="Proteomes" id="UP000184546">
    <property type="component" value="Unassembled WGS sequence"/>
</dbReference>
<dbReference type="GO" id="GO:0004497">
    <property type="term" value="F:monooxygenase activity"/>
    <property type="evidence" value="ECO:0007669"/>
    <property type="project" value="UniProtKB-KW"/>
</dbReference>
<dbReference type="InterPro" id="IPR050977">
    <property type="entry name" value="Fungal_Meroterpenoid_Isomerase"/>
</dbReference>
<dbReference type="InterPro" id="IPR032710">
    <property type="entry name" value="NTF2-like_dom_sf"/>
</dbReference>
<dbReference type="PANTHER" id="PTHR39598:SF1">
    <property type="entry name" value="AUSTINOID BIOSYNTHESIS CLUSTERS PROTEIN F-RELATED"/>
    <property type="match status" value="1"/>
</dbReference>
<dbReference type="PANTHER" id="PTHR39598">
    <property type="entry name" value="AUSTINOL SYNTHESIS PROTEIN F-RELATED"/>
    <property type="match status" value="1"/>
</dbReference>
<dbReference type="SUPFAM" id="SSF54427">
    <property type="entry name" value="NTF2-like"/>
    <property type="match status" value="1"/>
</dbReference>
<keyword id="KW-0503">Monooxygenase</keyword>
<keyword id="KW-0560">Oxidoreductase</keyword>
<keyword id="KW-1185">Reference proteome</keyword>
<protein>
    <recommendedName>
        <fullName evidence="7">Monooxygenase AacuP</fullName>
        <ecNumber evidence="9">1.-.-.-</ecNumber>
    </recommendedName>
    <alternativeName>
        <fullName evidence="7">Secalonic acid biosynthesis cluster protein P</fullName>
    </alternativeName>
</protein>